<keyword id="KW-0375">Hydrogen ion transport</keyword>
<keyword id="KW-0406">Ion transport</keyword>
<keyword id="KW-1185">Reference proteome</keyword>
<keyword id="KW-0813">Transport</keyword>
<reference key="1">
    <citation type="journal article" date="1998" name="Science">
        <title>Genome sequence of the nematode C. elegans: a platform for investigating biology.</title>
        <authorList>
            <consortium name="The C. elegans sequencing consortium"/>
        </authorList>
    </citation>
    <scope>NUCLEOTIDE SEQUENCE [LARGE SCALE GENOMIC DNA]</scope>
    <source>
        <strain>Bristol N2</strain>
    </source>
</reference>
<reference key="2">
    <citation type="journal article" date="2017" name="Nature">
        <title>A lysosomal switch triggers proteostasis renewal in the immortal C. elegans germ lineage.</title>
        <authorList>
            <person name="Bohnert K.A."/>
            <person name="Kenyon C."/>
        </authorList>
    </citation>
    <scope>FUNCTION</scope>
    <scope>DISRUPTION PHENOTYPE</scope>
</reference>
<protein>
    <recommendedName>
        <fullName>Probable V-type proton ATPase subunit F</fullName>
        <shortName>V-ATPase subunit F</shortName>
    </recommendedName>
    <alternativeName>
        <fullName>Vacuolar proton pump subunit F</fullName>
    </alternativeName>
</protein>
<accession>Q23680</accession>
<sequence length="121" mass="13312">MASAAKGKILAVIGDEDTVVGFLLGGVGELNKARKPNYLIVDKQTTVQEIEEAFNGFCARDDIAIILINQHIAEMIRYAVDNHTQSIPAVLEIPSKEAPYDPSKDSILNRARGLFNPEDFR</sequence>
<proteinExistence type="inferred from homology"/>
<name>VATF_CAEEL</name>
<dbReference type="EMBL" id="BX284602">
    <property type="protein sequence ID" value="CAA88888.1"/>
    <property type="molecule type" value="Genomic_DNA"/>
</dbReference>
<dbReference type="PIR" id="T28128">
    <property type="entry name" value="T28128"/>
</dbReference>
<dbReference type="RefSeq" id="NP_001369871.1">
    <property type="nucleotide sequence ID" value="NM_001383933.1"/>
</dbReference>
<dbReference type="RefSeq" id="NP_496217.1">
    <property type="nucleotide sequence ID" value="NM_063816.5"/>
</dbReference>
<dbReference type="SMR" id="Q23680"/>
<dbReference type="BioGRID" id="39915">
    <property type="interactions" value="10"/>
</dbReference>
<dbReference type="DIP" id="DIP-25749N"/>
<dbReference type="FunCoup" id="Q23680">
    <property type="interactions" value="2339"/>
</dbReference>
<dbReference type="IntAct" id="Q23680">
    <property type="interactions" value="1"/>
</dbReference>
<dbReference type="STRING" id="6239.ZK970.4.2"/>
<dbReference type="TCDB" id="3.A.2.2.7">
    <property type="family name" value="the h+- or na+-translocating f-type, v-type and a-type atpase (f-atpase) superfamily"/>
</dbReference>
<dbReference type="PaxDb" id="6239-ZK970.4.2"/>
<dbReference type="PeptideAtlas" id="Q23680"/>
<dbReference type="EnsemblMetazoa" id="ZK970.4.1">
    <property type="protein sequence ID" value="ZK970.4.1"/>
    <property type="gene ID" value="WBGene00006918"/>
</dbReference>
<dbReference type="GeneID" id="174596"/>
<dbReference type="UCSC" id="ZK970.4.1">
    <property type="organism name" value="c. elegans"/>
</dbReference>
<dbReference type="AGR" id="WB:WBGene00006918"/>
<dbReference type="WormBase" id="ZK970.4">
    <property type="protein sequence ID" value="CE02404"/>
    <property type="gene ID" value="WBGene00006918"/>
    <property type="gene designation" value="vha-9"/>
</dbReference>
<dbReference type="eggNOG" id="KOG3432">
    <property type="taxonomic scope" value="Eukaryota"/>
</dbReference>
<dbReference type="GeneTree" id="ENSGT00390000013208"/>
<dbReference type="HOGENOM" id="CLU_135754_0_0_1"/>
<dbReference type="InParanoid" id="Q23680"/>
<dbReference type="OMA" id="IIICQHI"/>
<dbReference type="OrthoDB" id="10261947at2759"/>
<dbReference type="PhylomeDB" id="Q23680"/>
<dbReference type="Reactome" id="R-CEL-1222556">
    <property type="pathway name" value="ROS and RNS production in phagocytes"/>
</dbReference>
<dbReference type="Reactome" id="R-CEL-77387">
    <property type="pathway name" value="Insulin receptor recycling"/>
</dbReference>
<dbReference type="Reactome" id="R-CEL-917977">
    <property type="pathway name" value="Transferrin endocytosis and recycling"/>
</dbReference>
<dbReference type="Reactome" id="R-CEL-9639288">
    <property type="pathway name" value="Amino acids regulate mTORC1"/>
</dbReference>
<dbReference type="Reactome" id="R-CEL-983712">
    <property type="pathway name" value="Ion channel transport"/>
</dbReference>
<dbReference type="PRO" id="PR:Q23680"/>
<dbReference type="Proteomes" id="UP000001940">
    <property type="component" value="Chromosome II"/>
</dbReference>
<dbReference type="Bgee" id="WBGene00006918">
    <property type="expression patterns" value="Expressed in larva and 4 other cell types or tissues"/>
</dbReference>
<dbReference type="GO" id="GO:0016020">
    <property type="term" value="C:membrane"/>
    <property type="evidence" value="ECO:0000318"/>
    <property type="project" value="GO_Central"/>
</dbReference>
<dbReference type="GO" id="GO:0033180">
    <property type="term" value="C:proton-transporting V-type ATPase, V1 domain"/>
    <property type="evidence" value="ECO:0007669"/>
    <property type="project" value="InterPro"/>
</dbReference>
<dbReference type="GO" id="GO:0046961">
    <property type="term" value="F:proton-transporting ATPase activity, rotational mechanism"/>
    <property type="evidence" value="ECO:0007669"/>
    <property type="project" value="InterPro"/>
</dbReference>
<dbReference type="GO" id="GO:0007042">
    <property type="term" value="P:lysosomal lumen acidification"/>
    <property type="evidence" value="ECO:0000315"/>
    <property type="project" value="UniProtKB"/>
</dbReference>
<dbReference type="FunFam" id="3.40.50.10580:FF:000001">
    <property type="entry name" value="V-type proton ATPase subunit F"/>
    <property type="match status" value="1"/>
</dbReference>
<dbReference type="Gene3D" id="3.40.50.10580">
    <property type="entry name" value="ATPase, V1 complex, subunit F"/>
    <property type="match status" value="1"/>
</dbReference>
<dbReference type="InterPro" id="IPR008218">
    <property type="entry name" value="ATPase_V1-cplx_f_g_su"/>
</dbReference>
<dbReference type="InterPro" id="IPR005772">
    <property type="entry name" value="ATPase_V1-cplx_fsu_euk"/>
</dbReference>
<dbReference type="InterPro" id="IPR036906">
    <property type="entry name" value="ATPase_V1_fsu_sf"/>
</dbReference>
<dbReference type="NCBIfam" id="TIGR01101">
    <property type="entry name" value="V_ATP_synt_F"/>
    <property type="match status" value="1"/>
</dbReference>
<dbReference type="PANTHER" id="PTHR13861:SF2">
    <property type="entry name" value="V-TYPE PROTON ATPASE SUBUNIT F"/>
    <property type="match status" value="1"/>
</dbReference>
<dbReference type="PANTHER" id="PTHR13861">
    <property type="entry name" value="VACUOLAR ATP SYNTHASE SUBUNIT F"/>
    <property type="match status" value="1"/>
</dbReference>
<dbReference type="Pfam" id="PF01990">
    <property type="entry name" value="ATP-synt_F"/>
    <property type="match status" value="1"/>
</dbReference>
<dbReference type="PIRSF" id="PIRSF015945">
    <property type="entry name" value="ATPase_V1_F_euk"/>
    <property type="match status" value="1"/>
</dbReference>
<dbReference type="SUPFAM" id="SSF159468">
    <property type="entry name" value="AtpF-like"/>
    <property type="match status" value="1"/>
</dbReference>
<feature type="chain" id="PRO_0000144804" description="Probable V-type proton ATPase subunit F">
    <location>
        <begin position="1"/>
        <end position="121"/>
    </location>
</feature>
<organism>
    <name type="scientific">Caenorhabditis elegans</name>
    <dbReference type="NCBI Taxonomy" id="6239"/>
    <lineage>
        <taxon>Eukaryota</taxon>
        <taxon>Metazoa</taxon>
        <taxon>Ecdysozoa</taxon>
        <taxon>Nematoda</taxon>
        <taxon>Chromadorea</taxon>
        <taxon>Rhabditida</taxon>
        <taxon>Rhabditina</taxon>
        <taxon>Rhabditomorpha</taxon>
        <taxon>Rhabditoidea</taxon>
        <taxon>Rhabditidae</taxon>
        <taxon>Peloderinae</taxon>
        <taxon>Caenorhabditis</taxon>
    </lineage>
</organism>
<gene>
    <name evidence="4" type="primary">vha-9</name>
    <name evidence="4" type="ORF">ZK970.4</name>
</gene>
<evidence type="ECO:0000250" key="1">
    <source>
        <dbReference type="UniProtKB" id="Q28029"/>
    </source>
</evidence>
<evidence type="ECO:0000269" key="2">
    <source>
    </source>
</evidence>
<evidence type="ECO:0000305" key="3"/>
<evidence type="ECO:0000312" key="4">
    <source>
        <dbReference type="WormBase" id="ZK970.4"/>
    </source>
</evidence>
<comment type="function">
    <text evidence="1 2">Subunit of the V1 complex of vacuolar(H+)-ATPase (V-ATPase), a multisubunit enzyme composed of a peripheral complex (V1) that hydrolyzes ATP and a membrane integral complex (V0) that translocates protons (By similarity). V-ATPase is responsible for acidifying and maintaining the pH of intracellular compartments and in some cell types, is targeted to the plasma membrane, where it is responsible for acidifying the extracellular environment (By similarity). Required along with other vacuolar ATPase components for the removal of protein aggregates which form in immature oocytes in the distal gonad (PubMed:29168500). This removal occurs as the oocytes mature and move to the proximal gonad, is triggered by the introduction of sperm through mating and occurs before fertilization (PubMed:29168500). The introduction of sperm triggers V-ATPase accumulation in proximal oocytes and induces lysosomal acidification which leads to engulfing of protein aggregates by lysosomes and subsequent clearance of the aggregates (PubMed:29168500). Lysosomal acidification also leads to changes in mitochondrial morphology and function (PubMed:29168500). Mitochondria in distal immature oocytes are fragmented, produce high levels of reactive oxygen species (ROS) and have high membrane potential, indicative of metabolic inactivity (PubMed:29168500). In contrast, mitochondria in proximal mature oocytes are tubular with lower ROS levels and membrane potential, indicative of an active metabolic state required for aggregate mobilization before clearance (PubMed:29168500).</text>
</comment>
<comment type="subunit">
    <text evidence="1">V-ATPase is a heteromultimeric enzyme made up of two complexes: the ATP-hydrolytic V1 complex and the proton translocation V0 complex (By similarity). The V1 complex consists of three catalytic AB heterodimers that form a heterohexamer, three peripheral stalks each consisting of EG heterodimers, one central rotor including subunits D and F, and the regulatory subunits C and H (By similarity). The proton translocation complex V0 consists of the proton transport subunit a, a ring of proteolipid subunits c9c'', rotary subunit d, subunits e and f, and the accessory subunits vah-19/Ac45 and vah-20/PRR (By similarity).</text>
</comment>
<comment type="disruption phenotype">
    <text evidence="2">RNAi-mediated knockdown results in increased protein aggregation in the oocytes of sperm-deficient young adult females which is not eliminated by mating.</text>
</comment>
<comment type="similarity">
    <text evidence="3">Belongs to the V-ATPase F subunit family.</text>
</comment>